<proteinExistence type="inferred from homology"/>
<organism>
    <name type="scientific">Sphingopyxis alaskensis (strain DSM 13593 / LMG 18877 / RB2256)</name>
    <name type="common">Sphingomonas alaskensis</name>
    <dbReference type="NCBI Taxonomy" id="317655"/>
    <lineage>
        <taxon>Bacteria</taxon>
        <taxon>Pseudomonadati</taxon>
        <taxon>Pseudomonadota</taxon>
        <taxon>Alphaproteobacteria</taxon>
        <taxon>Sphingomonadales</taxon>
        <taxon>Sphingomonadaceae</taxon>
        <taxon>Sphingopyxis</taxon>
    </lineage>
</organism>
<name>MURA_SPHAL</name>
<accession>Q1GVV2</accession>
<feature type="chain" id="PRO_1000023112" description="UDP-N-acetylglucosamine 1-carboxyvinyltransferase">
    <location>
        <begin position="1"/>
        <end position="427"/>
    </location>
</feature>
<feature type="active site" description="Proton donor" evidence="1">
    <location>
        <position position="123"/>
    </location>
</feature>
<feature type="binding site" evidence="1">
    <location>
        <begin position="22"/>
        <end position="23"/>
    </location>
    <ligand>
        <name>phosphoenolpyruvate</name>
        <dbReference type="ChEBI" id="CHEBI:58702"/>
    </ligand>
</feature>
<feature type="binding site" evidence="1">
    <location>
        <position position="99"/>
    </location>
    <ligand>
        <name>UDP-N-acetyl-alpha-D-glucosamine</name>
        <dbReference type="ChEBI" id="CHEBI:57705"/>
    </ligand>
</feature>
<feature type="binding site" evidence="1">
    <location>
        <begin position="128"/>
        <end position="132"/>
    </location>
    <ligand>
        <name>UDP-N-acetyl-alpha-D-glucosamine</name>
        <dbReference type="ChEBI" id="CHEBI:57705"/>
    </ligand>
</feature>
<feature type="binding site" evidence="1">
    <location>
        <position position="313"/>
    </location>
    <ligand>
        <name>UDP-N-acetyl-alpha-D-glucosamine</name>
        <dbReference type="ChEBI" id="CHEBI:57705"/>
    </ligand>
</feature>
<feature type="binding site" evidence="1">
    <location>
        <position position="335"/>
    </location>
    <ligand>
        <name>UDP-N-acetyl-alpha-D-glucosamine</name>
        <dbReference type="ChEBI" id="CHEBI:57705"/>
    </ligand>
</feature>
<feature type="modified residue" description="2-(S-cysteinyl)pyruvic acid O-phosphothioketal" evidence="1">
    <location>
        <position position="123"/>
    </location>
</feature>
<dbReference type="EC" id="2.5.1.7" evidence="1"/>
<dbReference type="EMBL" id="CP000356">
    <property type="protein sequence ID" value="ABF52220.1"/>
    <property type="molecule type" value="Genomic_DNA"/>
</dbReference>
<dbReference type="RefSeq" id="WP_011540811.1">
    <property type="nucleotide sequence ID" value="NC_008048.1"/>
</dbReference>
<dbReference type="SMR" id="Q1GVV2"/>
<dbReference type="STRING" id="317655.Sala_0499"/>
<dbReference type="KEGG" id="sal:Sala_0499"/>
<dbReference type="eggNOG" id="COG0766">
    <property type="taxonomic scope" value="Bacteria"/>
</dbReference>
<dbReference type="HOGENOM" id="CLU_027387_0_0_5"/>
<dbReference type="OrthoDB" id="9803760at2"/>
<dbReference type="UniPathway" id="UPA00219"/>
<dbReference type="Proteomes" id="UP000006578">
    <property type="component" value="Chromosome"/>
</dbReference>
<dbReference type="GO" id="GO:0005737">
    <property type="term" value="C:cytoplasm"/>
    <property type="evidence" value="ECO:0007669"/>
    <property type="project" value="UniProtKB-SubCell"/>
</dbReference>
<dbReference type="GO" id="GO:0008760">
    <property type="term" value="F:UDP-N-acetylglucosamine 1-carboxyvinyltransferase activity"/>
    <property type="evidence" value="ECO:0007669"/>
    <property type="project" value="UniProtKB-UniRule"/>
</dbReference>
<dbReference type="GO" id="GO:0051301">
    <property type="term" value="P:cell division"/>
    <property type="evidence" value="ECO:0007669"/>
    <property type="project" value="UniProtKB-KW"/>
</dbReference>
<dbReference type="GO" id="GO:0071555">
    <property type="term" value="P:cell wall organization"/>
    <property type="evidence" value="ECO:0007669"/>
    <property type="project" value="UniProtKB-KW"/>
</dbReference>
<dbReference type="GO" id="GO:0009252">
    <property type="term" value="P:peptidoglycan biosynthetic process"/>
    <property type="evidence" value="ECO:0007669"/>
    <property type="project" value="UniProtKB-UniRule"/>
</dbReference>
<dbReference type="GO" id="GO:0008360">
    <property type="term" value="P:regulation of cell shape"/>
    <property type="evidence" value="ECO:0007669"/>
    <property type="project" value="UniProtKB-KW"/>
</dbReference>
<dbReference type="GO" id="GO:0019277">
    <property type="term" value="P:UDP-N-acetylgalactosamine biosynthetic process"/>
    <property type="evidence" value="ECO:0007669"/>
    <property type="project" value="InterPro"/>
</dbReference>
<dbReference type="CDD" id="cd01555">
    <property type="entry name" value="UdpNAET"/>
    <property type="match status" value="1"/>
</dbReference>
<dbReference type="FunFam" id="3.65.10.10:FF:000001">
    <property type="entry name" value="UDP-N-acetylglucosamine 1-carboxyvinyltransferase"/>
    <property type="match status" value="1"/>
</dbReference>
<dbReference type="Gene3D" id="3.65.10.10">
    <property type="entry name" value="Enolpyruvate transferase domain"/>
    <property type="match status" value="2"/>
</dbReference>
<dbReference type="HAMAP" id="MF_00111">
    <property type="entry name" value="MurA"/>
    <property type="match status" value="1"/>
</dbReference>
<dbReference type="InterPro" id="IPR001986">
    <property type="entry name" value="Enolpyruvate_Tfrase_dom"/>
</dbReference>
<dbReference type="InterPro" id="IPR036968">
    <property type="entry name" value="Enolpyruvate_Tfrase_sf"/>
</dbReference>
<dbReference type="InterPro" id="IPR050068">
    <property type="entry name" value="MurA_subfamily"/>
</dbReference>
<dbReference type="InterPro" id="IPR013792">
    <property type="entry name" value="RNA3'P_cycl/enolpyr_Trfase_a/b"/>
</dbReference>
<dbReference type="InterPro" id="IPR005750">
    <property type="entry name" value="UDP_GlcNAc_COvinyl_MurA"/>
</dbReference>
<dbReference type="NCBIfam" id="TIGR01072">
    <property type="entry name" value="murA"/>
    <property type="match status" value="1"/>
</dbReference>
<dbReference type="NCBIfam" id="NF006873">
    <property type="entry name" value="PRK09369.1"/>
    <property type="match status" value="1"/>
</dbReference>
<dbReference type="PANTHER" id="PTHR43783">
    <property type="entry name" value="UDP-N-ACETYLGLUCOSAMINE 1-CARBOXYVINYLTRANSFERASE"/>
    <property type="match status" value="1"/>
</dbReference>
<dbReference type="PANTHER" id="PTHR43783:SF1">
    <property type="entry name" value="UDP-N-ACETYLGLUCOSAMINE 1-CARBOXYVINYLTRANSFERASE"/>
    <property type="match status" value="1"/>
</dbReference>
<dbReference type="Pfam" id="PF00275">
    <property type="entry name" value="EPSP_synthase"/>
    <property type="match status" value="1"/>
</dbReference>
<dbReference type="SUPFAM" id="SSF55205">
    <property type="entry name" value="EPT/RTPC-like"/>
    <property type="match status" value="1"/>
</dbReference>
<protein>
    <recommendedName>
        <fullName evidence="1">UDP-N-acetylglucosamine 1-carboxyvinyltransferase</fullName>
        <ecNumber evidence="1">2.5.1.7</ecNumber>
    </recommendedName>
    <alternativeName>
        <fullName evidence="1">Enoylpyruvate transferase</fullName>
    </alternativeName>
    <alternativeName>
        <fullName evidence="1">UDP-N-acetylglucosamine enolpyruvyl transferase</fullName>
        <shortName evidence="1">EPT</shortName>
    </alternativeName>
</protein>
<comment type="function">
    <text evidence="1">Cell wall formation. Adds enolpyruvyl to UDP-N-acetylglucosamine.</text>
</comment>
<comment type="catalytic activity">
    <reaction evidence="1">
        <text>phosphoenolpyruvate + UDP-N-acetyl-alpha-D-glucosamine = UDP-N-acetyl-3-O-(1-carboxyvinyl)-alpha-D-glucosamine + phosphate</text>
        <dbReference type="Rhea" id="RHEA:18681"/>
        <dbReference type="ChEBI" id="CHEBI:43474"/>
        <dbReference type="ChEBI" id="CHEBI:57705"/>
        <dbReference type="ChEBI" id="CHEBI:58702"/>
        <dbReference type="ChEBI" id="CHEBI:68483"/>
        <dbReference type="EC" id="2.5.1.7"/>
    </reaction>
</comment>
<comment type="pathway">
    <text evidence="1">Cell wall biogenesis; peptidoglycan biosynthesis.</text>
</comment>
<comment type="subcellular location">
    <subcellularLocation>
        <location evidence="1">Cytoplasm</location>
    </subcellularLocation>
</comment>
<comment type="similarity">
    <text evidence="1">Belongs to the EPSP synthase family. MurA subfamily.</text>
</comment>
<sequence length="427" mass="44763">MDQIVIRGGQRLKGRIPISGAKNAALTLLPCALLTDEPLTLRNLPRLADVDGFGHLLNQLGCSTTIEGSRPEDFGRVMTARATTLTSTVAPYDIVRKMRASILVLGPLLARAGEATVSLPGGCAIGNRPIDLHLKALEAFGAEIELASGYVKAVAAGGRLAGGRFTFPVVSVGATENAVMAAVLAKGTCVLENAAREPEIVDLCNCLVAMGAHIEGIGTETLTIEGVDRLHGATYRVMADRIEAGSYACAAVITEGDVELVGAKASEMEATLAALREAGATVEETKGGIRVAMAGRAQPVTLSTAPYPGFATDMQAQFMAMATLGTGASLFTETIFENRYMHVPELARMGCDIQVKGRTAVVRGVDRLIGAPVMATDLRASMSLIIAGLAAEGTTEVNRVYHLDRGYERLEEKLQAVGADIERISAG</sequence>
<gene>
    <name evidence="1" type="primary">murA</name>
    <name type="ordered locus">Sala_0499</name>
</gene>
<evidence type="ECO:0000255" key="1">
    <source>
        <dbReference type="HAMAP-Rule" id="MF_00111"/>
    </source>
</evidence>
<reference key="1">
    <citation type="journal article" date="2009" name="Proc. Natl. Acad. Sci. U.S.A.">
        <title>The genomic basis of trophic strategy in marine bacteria.</title>
        <authorList>
            <person name="Lauro F.M."/>
            <person name="McDougald D."/>
            <person name="Thomas T."/>
            <person name="Williams T.J."/>
            <person name="Egan S."/>
            <person name="Rice S."/>
            <person name="DeMaere M.Z."/>
            <person name="Ting L."/>
            <person name="Ertan H."/>
            <person name="Johnson J."/>
            <person name="Ferriera S."/>
            <person name="Lapidus A."/>
            <person name="Anderson I."/>
            <person name="Kyrpides N."/>
            <person name="Munk A.C."/>
            <person name="Detter C."/>
            <person name="Han C.S."/>
            <person name="Brown M.V."/>
            <person name="Robb F.T."/>
            <person name="Kjelleberg S."/>
            <person name="Cavicchioli R."/>
        </authorList>
    </citation>
    <scope>NUCLEOTIDE SEQUENCE [LARGE SCALE GENOMIC DNA]</scope>
    <source>
        <strain>DSM 13593 / LMG 18877 / RB2256</strain>
    </source>
</reference>
<keyword id="KW-0131">Cell cycle</keyword>
<keyword id="KW-0132">Cell division</keyword>
<keyword id="KW-0133">Cell shape</keyword>
<keyword id="KW-0961">Cell wall biogenesis/degradation</keyword>
<keyword id="KW-0963">Cytoplasm</keyword>
<keyword id="KW-0573">Peptidoglycan synthesis</keyword>
<keyword id="KW-0670">Pyruvate</keyword>
<keyword id="KW-1185">Reference proteome</keyword>
<keyword id="KW-0808">Transferase</keyword>